<protein>
    <recommendedName>
        <fullName>Protein map</fullName>
    </recommendedName>
</protein>
<keyword id="KW-0002">3D-structure</keyword>
<keyword id="KW-0677">Repeat</keyword>
<keyword id="KW-0732">Signal</keyword>
<feature type="signal peptide" evidence="1">
    <location>
        <begin position="1"/>
        <end position="30"/>
    </location>
</feature>
<feature type="chain" id="PRO_0000021639" description="Protein map">
    <location>
        <begin position="31"/>
        <end position="476"/>
    </location>
</feature>
<feature type="repeat" description="MAP 1">
    <location>
        <begin position="45"/>
        <end position="153"/>
    </location>
</feature>
<feature type="repeat" description="MAP 2">
    <location>
        <begin position="154"/>
        <end position="263"/>
    </location>
</feature>
<feature type="repeat" description="MAP 3">
    <location>
        <begin position="264"/>
        <end position="372"/>
    </location>
</feature>
<feature type="repeat" description="MAP 4">
    <location>
        <begin position="373"/>
        <end position="476"/>
    </location>
</feature>
<feature type="strand" evidence="3">
    <location>
        <begin position="49"/>
        <end position="58"/>
    </location>
</feature>
<feature type="strand" evidence="5">
    <location>
        <begin position="60"/>
        <end position="62"/>
    </location>
</feature>
<feature type="strand" evidence="3">
    <location>
        <begin position="67"/>
        <end position="71"/>
    </location>
</feature>
<feature type="helix" evidence="3">
    <location>
        <begin position="78"/>
        <end position="93"/>
    </location>
</feature>
<feature type="helix" evidence="3">
    <location>
        <begin position="97"/>
        <end position="102"/>
    </location>
</feature>
<feature type="strand" evidence="3">
    <location>
        <begin position="106"/>
        <end position="112"/>
    </location>
</feature>
<feature type="strand" evidence="3">
    <location>
        <begin position="117"/>
        <end position="121"/>
    </location>
</feature>
<feature type="strand" evidence="4">
    <location>
        <begin position="126"/>
        <end position="129"/>
    </location>
</feature>
<feature type="helix" evidence="3">
    <location>
        <begin position="134"/>
        <end position="136"/>
    </location>
</feature>
<feature type="strand" evidence="3">
    <location>
        <begin position="137"/>
        <end position="144"/>
    </location>
</feature>
<feature type="strand" evidence="2">
    <location>
        <begin position="160"/>
        <end position="166"/>
    </location>
</feature>
<feature type="strand" evidence="7">
    <location>
        <begin position="169"/>
        <end position="171"/>
    </location>
</feature>
<feature type="strand" evidence="2">
    <location>
        <begin position="173"/>
        <end position="179"/>
    </location>
</feature>
<feature type="strand" evidence="2">
    <location>
        <begin position="184"/>
        <end position="186"/>
    </location>
</feature>
<feature type="helix" evidence="2">
    <location>
        <begin position="187"/>
        <end position="202"/>
    </location>
</feature>
<feature type="helix" evidence="2">
    <location>
        <begin position="206"/>
        <end position="211"/>
    </location>
</feature>
<feature type="strand" evidence="2">
    <location>
        <begin position="215"/>
        <end position="221"/>
    </location>
</feature>
<feature type="strand" evidence="2">
    <location>
        <begin position="226"/>
        <end position="230"/>
    </location>
</feature>
<feature type="turn" evidence="6">
    <location>
        <begin position="231"/>
        <end position="233"/>
    </location>
</feature>
<feature type="strand" evidence="6">
    <location>
        <begin position="235"/>
        <end position="238"/>
    </location>
</feature>
<feature type="strand" evidence="2">
    <location>
        <begin position="240"/>
        <end position="242"/>
    </location>
</feature>
<feature type="helix" evidence="2">
    <location>
        <begin position="243"/>
        <end position="245"/>
    </location>
</feature>
<feature type="strand" evidence="2">
    <location>
        <begin position="246"/>
        <end position="253"/>
    </location>
</feature>
<feature type="strand" evidence="9">
    <location>
        <begin position="267"/>
        <end position="275"/>
    </location>
</feature>
<feature type="strand" evidence="9">
    <location>
        <begin position="278"/>
        <end position="281"/>
    </location>
</feature>
<feature type="strand" evidence="9">
    <location>
        <begin position="283"/>
        <end position="289"/>
    </location>
</feature>
<feature type="helix" evidence="9">
    <location>
        <begin position="296"/>
        <end position="311"/>
    </location>
</feature>
<feature type="helix" evidence="9">
    <location>
        <begin position="315"/>
        <end position="319"/>
    </location>
</feature>
<feature type="strand" evidence="9">
    <location>
        <begin position="324"/>
        <end position="330"/>
    </location>
</feature>
<feature type="strand" evidence="9">
    <location>
        <begin position="335"/>
        <end position="339"/>
    </location>
</feature>
<feature type="strand" evidence="9">
    <location>
        <begin position="344"/>
        <end position="346"/>
    </location>
</feature>
<feature type="helix" evidence="9">
    <location>
        <begin position="352"/>
        <end position="354"/>
    </location>
</feature>
<feature type="strand" evidence="9">
    <location>
        <begin position="355"/>
        <end position="362"/>
    </location>
</feature>
<feature type="strand" evidence="8">
    <location>
        <begin position="372"/>
        <end position="380"/>
    </location>
</feature>
<feature type="strand" evidence="8">
    <location>
        <begin position="389"/>
        <end position="393"/>
    </location>
</feature>
<feature type="helix" evidence="8">
    <location>
        <begin position="401"/>
        <end position="416"/>
    </location>
</feature>
<feature type="helix" evidence="8">
    <location>
        <begin position="420"/>
        <end position="425"/>
    </location>
</feature>
<feature type="strand" evidence="8">
    <location>
        <begin position="427"/>
        <end position="435"/>
    </location>
</feature>
<feature type="strand" evidence="8">
    <location>
        <begin position="440"/>
        <end position="444"/>
    </location>
</feature>
<feature type="helix" evidence="8">
    <location>
        <begin position="457"/>
        <end position="459"/>
    </location>
</feature>
<feature type="strand" evidence="8">
    <location>
        <begin position="460"/>
        <end position="468"/>
    </location>
</feature>
<proteinExistence type="evidence at protein level"/>
<organism>
    <name type="scientific">Staphylococcus aureus (strain Mu50 / ATCC 700699)</name>
    <dbReference type="NCBI Taxonomy" id="158878"/>
    <lineage>
        <taxon>Bacteria</taxon>
        <taxon>Bacillati</taxon>
        <taxon>Bacillota</taxon>
        <taxon>Bacilli</taxon>
        <taxon>Bacillales</taxon>
        <taxon>Staphylococcaceae</taxon>
        <taxon>Staphylococcus</taxon>
    </lineage>
</organism>
<dbReference type="EMBL" id="BA000017">
    <property type="protein sequence ID" value="BAB58100.1"/>
    <property type="molecule type" value="Genomic_DNA"/>
</dbReference>
<dbReference type="RefSeq" id="WP_001557458.1">
    <property type="nucleotide sequence ID" value="NC_002758.2"/>
</dbReference>
<dbReference type="PDB" id="1YN3">
    <property type="method" value="X-ray"/>
    <property type="resolution" value="1.35 A"/>
    <property type="chains" value="A/B=160-252"/>
</dbReference>
<dbReference type="PDB" id="8D4O">
    <property type="method" value="X-ray"/>
    <property type="resolution" value="1.45 A"/>
    <property type="chains" value="A/B/C/D=49-145"/>
</dbReference>
<dbReference type="PDB" id="8D4Q">
    <property type="method" value="X-ray"/>
    <property type="resolution" value="2.20 A"/>
    <property type="chains" value="C/D=49-145"/>
</dbReference>
<dbReference type="PDB" id="8D4S">
    <property type="method" value="X-ray"/>
    <property type="resolution" value="1.95 A"/>
    <property type="chains" value="B/D/F/H=49-145"/>
</dbReference>
<dbReference type="PDB" id="8D4U">
    <property type="method" value="X-ray"/>
    <property type="resolution" value="1.90 A"/>
    <property type="chains" value="C/D=158-254"/>
</dbReference>
<dbReference type="PDB" id="8D4V">
    <property type="method" value="X-ray"/>
    <property type="resolution" value="1.85 A"/>
    <property type="chains" value="B/D=158-254"/>
</dbReference>
<dbReference type="PDB" id="8D7I">
    <property type="method" value="X-ray"/>
    <property type="resolution" value="3.63 A"/>
    <property type="chains" value="B/E/H/K/N/Q=49-145"/>
</dbReference>
<dbReference type="PDB" id="8D7K">
    <property type="method" value="X-ray"/>
    <property type="resolution" value="3.10 A"/>
    <property type="chains" value="B/E/H/K=158-254"/>
</dbReference>
<dbReference type="PDB" id="9ASS">
    <property type="method" value="X-ray"/>
    <property type="resolution" value="1.75 A"/>
    <property type="chains" value="C=372-476"/>
</dbReference>
<dbReference type="PDB" id="9ASX">
    <property type="method" value="X-ray"/>
    <property type="resolution" value="1.96 A"/>
    <property type="chains" value="C=267-363"/>
</dbReference>
<dbReference type="PDB" id="9ATK">
    <property type="method" value="X-ray"/>
    <property type="resolution" value="2.11 A"/>
    <property type="chains" value="C/F/I/L=372-476"/>
</dbReference>
<dbReference type="PDB" id="9ATU">
    <property type="method" value="X-ray"/>
    <property type="resolution" value="2.05 A"/>
    <property type="chains" value="B/E=372-476"/>
</dbReference>
<dbReference type="PDBsum" id="1YN3"/>
<dbReference type="PDBsum" id="8D4O"/>
<dbReference type="PDBsum" id="8D4Q"/>
<dbReference type="PDBsum" id="8D4S"/>
<dbReference type="PDBsum" id="8D4U"/>
<dbReference type="PDBsum" id="8D4V"/>
<dbReference type="PDBsum" id="8D7I"/>
<dbReference type="PDBsum" id="8D7K"/>
<dbReference type="PDBsum" id="9ASS"/>
<dbReference type="PDBsum" id="9ASX"/>
<dbReference type="PDBsum" id="9ATK"/>
<dbReference type="PDBsum" id="9ATU"/>
<dbReference type="SASBDB" id="Q99QS1"/>
<dbReference type="SMR" id="Q99QS1"/>
<dbReference type="KEGG" id="sav:SAV1938"/>
<dbReference type="HOGENOM" id="CLU_466842_0_0_9"/>
<dbReference type="EvolutionaryTrace" id="Q99QS1"/>
<dbReference type="Proteomes" id="UP000002481">
    <property type="component" value="Chromosome"/>
</dbReference>
<dbReference type="Gene3D" id="3.10.20.120">
    <property type="match status" value="4"/>
</dbReference>
<dbReference type="InterPro" id="IPR005298">
    <property type="entry name" value="MAP_dom"/>
</dbReference>
<dbReference type="Pfam" id="PF03642">
    <property type="entry name" value="MAP"/>
    <property type="match status" value="4"/>
</dbReference>
<dbReference type="PROSITE" id="PS51223">
    <property type="entry name" value="MAP"/>
    <property type="match status" value="4"/>
</dbReference>
<gene>
    <name type="primary">map</name>
    <name type="ordered locus">SAV1938</name>
</gene>
<reference key="1">
    <citation type="journal article" date="2001" name="Lancet">
        <title>Whole genome sequencing of meticillin-resistant Staphylococcus aureus.</title>
        <authorList>
            <person name="Kuroda M."/>
            <person name="Ohta T."/>
            <person name="Uchiyama I."/>
            <person name="Baba T."/>
            <person name="Yuzawa H."/>
            <person name="Kobayashi I."/>
            <person name="Cui L."/>
            <person name="Oguchi A."/>
            <person name="Aoki K."/>
            <person name="Nagai Y."/>
            <person name="Lian J.-Q."/>
            <person name="Ito T."/>
            <person name="Kanamori M."/>
            <person name="Matsumaru H."/>
            <person name="Maruyama A."/>
            <person name="Murakami H."/>
            <person name="Hosoyama A."/>
            <person name="Mizutani-Ui Y."/>
            <person name="Takahashi N.K."/>
            <person name="Sawano T."/>
            <person name="Inoue R."/>
            <person name="Kaito C."/>
            <person name="Sekimizu K."/>
            <person name="Hirakawa H."/>
            <person name="Kuhara S."/>
            <person name="Goto S."/>
            <person name="Yabuzaki J."/>
            <person name="Kanehisa M."/>
            <person name="Yamashita A."/>
            <person name="Oshima K."/>
            <person name="Furuya K."/>
            <person name="Yoshino C."/>
            <person name="Shiba T."/>
            <person name="Hattori M."/>
            <person name="Ogasawara N."/>
            <person name="Hayashi H."/>
            <person name="Hiramatsu K."/>
        </authorList>
    </citation>
    <scope>NUCLEOTIDE SEQUENCE [LARGE SCALE GENOMIC DNA]</scope>
    <source>
        <strain>Mu50 / ATCC 700699</strain>
    </source>
</reference>
<reference key="2">
    <citation type="journal article" date="2005" name="J. Biol. Chem.">
        <title>The crystal structures of EAP domains from Staphylococcus aureus reveal an unexpected homology to bacterial superantigens.</title>
        <authorList>
            <person name="Geisbrecht B.V."/>
            <person name="Hamaoka B.Y."/>
            <person name="Perman B."/>
            <person name="Zemla A."/>
            <person name="Leahy D.J."/>
        </authorList>
    </citation>
    <scope>X-RAY CRYSTALLOGRAPHY (1.35 ANGSTROMS) OF 160-252</scope>
</reference>
<evidence type="ECO:0000255" key="1"/>
<evidence type="ECO:0007829" key="2">
    <source>
        <dbReference type="PDB" id="1YN3"/>
    </source>
</evidence>
<evidence type="ECO:0007829" key="3">
    <source>
        <dbReference type="PDB" id="8D4O"/>
    </source>
</evidence>
<evidence type="ECO:0007829" key="4">
    <source>
        <dbReference type="PDB" id="8D4Q"/>
    </source>
</evidence>
<evidence type="ECO:0007829" key="5">
    <source>
        <dbReference type="PDB" id="8D4S"/>
    </source>
</evidence>
<evidence type="ECO:0007829" key="6">
    <source>
        <dbReference type="PDB" id="8D4U"/>
    </source>
</evidence>
<evidence type="ECO:0007829" key="7">
    <source>
        <dbReference type="PDB" id="8D4V"/>
    </source>
</evidence>
<evidence type="ECO:0007829" key="8">
    <source>
        <dbReference type="PDB" id="9ASS"/>
    </source>
</evidence>
<evidence type="ECO:0007829" key="9">
    <source>
        <dbReference type="PDB" id="9ASX"/>
    </source>
</evidence>
<accession>Q99QS1</accession>
<name>MAP_STAAM</name>
<sequence>MKFKSLITTTLALGVIASTGANFNTNEASAAAKPLDKSSSTLHHGHSNIQIPYTITVNGTSQNILSSLTFNKNQNISYKDIENKVKSVLYFNRGISDIDLRLSKQAEYTVHFKNGTKRVIDLKSGIYTADLINTSDIKAISVNVDTKKQPKDKAKANVQVPYTITVNGTSQNILSNLTFNKNQNISYKDLEGKVKSVLESNRGITDVDLRLSKQAKYTVNFKNGTKKVIDLKSGIYTANLINSSDIKSININVDTKKHIENKAKRNYQVPYSINLNGTSTNILSNLSFSNKPWTNYKNLTSQIKSVLKHDRGISEQDLKYAKKAYYTVYFKNGGKRILQLNSKNYTANLVHAKDVKRIEITVKTGTKAKADRYVPYTIAVNGTSTPILSKLKISNKQLISYKYLNDKVKSVLKSERGISDLDLKFAKQAKYTVYFKNGKKQVVNLKSDIFTPNLFSAKDIKKIDIDVKQYTKSKKK</sequence>